<organism>
    <name type="scientific">Streptococcus pyogenes serotype M1</name>
    <dbReference type="NCBI Taxonomy" id="301447"/>
    <lineage>
        <taxon>Bacteria</taxon>
        <taxon>Bacillati</taxon>
        <taxon>Bacillota</taxon>
        <taxon>Bacilli</taxon>
        <taxon>Lactobacillales</taxon>
        <taxon>Streptococcaceae</taxon>
        <taxon>Streptococcus</taxon>
    </lineage>
</organism>
<reference key="1">
    <citation type="journal article" date="2001" name="Proc. Natl. Acad. Sci. U.S.A.">
        <title>Complete genome sequence of an M1 strain of Streptococcus pyogenes.</title>
        <authorList>
            <person name="Ferretti J.J."/>
            <person name="McShan W.M."/>
            <person name="Ajdic D.J."/>
            <person name="Savic D.J."/>
            <person name="Savic G."/>
            <person name="Lyon K."/>
            <person name="Primeaux C."/>
            <person name="Sezate S."/>
            <person name="Suvorov A.N."/>
            <person name="Kenton S."/>
            <person name="Lai H.S."/>
            <person name="Lin S.P."/>
            <person name="Qian Y."/>
            <person name="Jia H.G."/>
            <person name="Najar F.Z."/>
            <person name="Ren Q."/>
            <person name="Zhu H."/>
            <person name="Song L."/>
            <person name="White J."/>
            <person name="Yuan X."/>
            <person name="Clifton S.W."/>
            <person name="Roe B.A."/>
            <person name="McLaughlin R.E."/>
        </authorList>
    </citation>
    <scope>NUCLEOTIDE SEQUENCE [LARGE SCALE GENOMIC DNA]</scope>
    <source>
        <strain>ATCC 700294 / SF370 / Serotype M1</strain>
    </source>
</reference>
<reference key="2">
    <citation type="journal article" date="2005" name="J. Infect. Dis.">
        <title>Evolutionary origin and emergence of a highly successful clone of serotype M1 group A Streptococcus involved multiple horizontal gene transfer events.</title>
        <authorList>
            <person name="Sumby P."/>
            <person name="Porcella S.F."/>
            <person name="Madrigal A.G."/>
            <person name="Barbian K.D."/>
            <person name="Virtaneva K."/>
            <person name="Ricklefs S.M."/>
            <person name="Sturdevant D.E."/>
            <person name="Graham M.R."/>
            <person name="Vuopio-Varkila J."/>
            <person name="Hoe N.P."/>
            <person name="Musser J.M."/>
        </authorList>
    </citation>
    <scope>NUCLEOTIDE SEQUENCE [LARGE SCALE GENOMIC DNA]</scope>
    <source>
        <strain>ATCC BAA-947 / MGAS5005 / Serotype M1</strain>
    </source>
</reference>
<name>SYS_STRP1</name>
<dbReference type="EC" id="6.1.1.11" evidence="1"/>
<dbReference type="EMBL" id="AE004092">
    <property type="protein sequence ID" value="AAK34486.1"/>
    <property type="molecule type" value="Genomic_DNA"/>
</dbReference>
<dbReference type="EMBL" id="CP000017">
    <property type="protein sequence ID" value="AAZ52101.1"/>
    <property type="molecule type" value="Genomic_DNA"/>
</dbReference>
<dbReference type="RefSeq" id="NP_269765.1">
    <property type="nucleotide sequence ID" value="NC_002737.2"/>
</dbReference>
<dbReference type="SMR" id="Q99YE2"/>
<dbReference type="PaxDb" id="1314-HKU360_01538"/>
<dbReference type="KEGG" id="spy:SPy_1742"/>
<dbReference type="KEGG" id="spz:M5005_Spy1483"/>
<dbReference type="PATRIC" id="fig|160490.10.peg.1516"/>
<dbReference type="HOGENOM" id="CLU_023797_1_1_9"/>
<dbReference type="OMA" id="GYTPCFR"/>
<dbReference type="UniPathway" id="UPA00906">
    <property type="reaction ID" value="UER00895"/>
</dbReference>
<dbReference type="Proteomes" id="UP000000750">
    <property type="component" value="Chromosome"/>
</dbReference>
<dbReference type="GO" id="GO:0005737">
    <property type="term" value="C:cytoplasm"/>
    <property type="evidence" value="ECO:0007669"/>
    <property type="project" value="UniProtKB-SubCell"/>
</dbReference>
<dbReference type="GO" id="GO:0005524">
    <property type="term" value="F:ATP binding"/>
    <property type="evidence" value="ECO:0007669"/>
    <property type="project" value="UniProtKB-UniRule"/>
</dbReference>
<dbReference type="GO" id="GO:0140096">
    <property type="term" value="F:catalytic activity, acting on a protein"/>
    <property type="evidence" value="ECO:0007669"/>
    <property type="project" value="UniProtKB-ARBA"/>
</dbReference>
<dbReference type="GO" id="GO:0004828">
    <property type="term" value="F:serine-tRNA ligase activity"/>
    <property type="evidence" value="ECO:0007669"/>
    <property type="project" value="UniProtKB-UniRule"/>
</dbReference>
<dbReference type="GO" id="GO:0016740">
    <property type="term" value="F:transferase activity"/>
    <property type="evidence" value="ECO:0007669"/>
    <property type="project" value="UniProtKB-ARBA"/>
</dbReference>
<dbReference type="GO" id="GO:0016260">
    <property type="term" value="P:selenocysteine biosynthetic process"/>
    <property type="evidence" value="ECO:0007669"/>
    <property type="project" value="UniProtKB-UniRule"/>
</dbReference>
<dbReference type="GO" id="GO:0006434">
    <property type="term" value="P:seryl-tRNA aminoacylation"/>
    <property type="evidence" value="ECO:0007669"/>
    <property type="project" value="UniProtKB-UniRule"/>
</dbReference>
<dbReference type="CDD" id="cd00770">
    <property type="entry name" value="SerRS_core"/>
    <property type="match status" value="1"/>
</dbReference>
<dbReference type="Gene3D" id="3.30.930.10">
    <property type="entry name" value="Bira Bifunctional Protein, Domain 2"/>
    <property type="match status" value="1"/>
</dbReference>
<dbReference type="Gene3D" id="1.10.287.40">
    <property type="entry name" value="Serine-tRNA synthetase, tRNA binding domain"/>
    <property type="match status" value="1"/>
</dbReference>
<dbReference type="HAMAP" id="MF_00176">
    <property type="entry name" value="Ser_tRNA_synth_type1"/>
    <property type="match status" value="1"/>
</dbReference>
<dbReference type="InterPro" id="IPR002314">
    <property type="entry name" value="aa-tRNA-synt_IIb"/>
</dbReference>
<dbReference type="InterPro" id="IPR006195">
    <property type="entry name" value="aa-tRNA-synth_II"/>
</dbReference>
<dbReference type="InterPro" id="IPR045864">
    <property type="entry name" value="aa-tRNA-synth_II/BPL/LPL"/>
</dbReference>
<dbReference type="InterPro" id="IPR002317">
    <property type="entry name" value="Ser-tRNA-ligase_type_1"/>
</dbReference>
<dbReference type="InterPro" id="IPR015866">
    <property type="entry name" value="Ser-tRNA-synth_1_N"/>
</dbReference>
<dbReference type="InterPro" id="IPR042103">
    <property type="entry name" value="SerRS_1_N_sf"/>
</dbReference>
<dbReference type="InterPro" id="IPR033729">
    <property type="entry name" value="SerRS_core"/>
</dbReference>
<dbReference type="InterPro" id="IPR010978">
    <property type="entry name" value="tRNA-bd_arm"/>
</dbReference>
<dbReference type="NCBIfam" id="TIGR00414">
    <property type="entry name" value="serS"/>
    <property type="match status" value="1"/>
</dbReference>
<dbReference type="PANTHER" id="PTHR43697:SF1">
    <property type="entry name" value="SERINE--TRNA LIGASE"/>
    <property type="match status" value="1"/>
</dbReference>
<dbReference type="PANTHER" id="PTHR43697">
    <property type="entry name" value="SERYL-TRNA SYNTHETASE"/>
    <property type="match status" value="1"/>
</dbReference>
<dbReference type="Pfam" id="PF02403">
    <property type="entry name" value="Seryl_tRNA_N"/>
    <property type="match status" value="1"/>
</dbReference>
<dbReference type="Pfam" id="PF00587">
    <property type="entry name" value="tRNA-synt_2b"/>
    <property type="match status" value="1"/>
</dbReference>
<dbReference type="PIRSF" id="PIRSF001529">
    <property type="entry name" value="Ser-tRNA-synth_IIa"/>
    <property type="match status" value="1"/>
</dbReference>
<dbReference type="PRINTS" id="PR00981">
    <property type="entry name" value="TRNASYNTHSER"/>
</dbReference>
<dbReference type="SUPFAM" id="SSF55681">
    <property type="entry name" value="Class II aaRS and biotin synthetases"/>
    <property type="match status" value="1"/>
</dbReference>
<dbReference type="SUPFAM" id="SSF46589">
    <property type="entry name" value="tRNA-binding arm"/>
    <property type="match status" value="1"/>
</dbReference>
<dbReference type="PROSITE" id="PS50862">
    <property type="entry name" value="AA_TRNA_LIGASE_II"/>
    <property type="match status" value="1"/>
</dbReference>
<sequence>MLDLKRIRTDFDTVAAKLKNRGVSEDTLTHLKELDEKRRALLVQSEELKAERNIASAAIAQAKRQKEDATQQIADMQKVSADIKTIDNQLVAIDQQVTDIITVLPNTPHDSVPVGADEEDNVEIRRWGTPRDFDFEVKAHWDLGEDLDILDWERGAKVTGARFLFYKNLGARLERALYNFMLDEHIKEGYQEIITPYMVNHDSMFGTGQYPKFKEDTFELADTNFVLIPTAEVPLTNYYRGEILDGKELPIYFTAMSPSFRSEAGSAGRDTRGLIRLHQFHKVEMVKFAKPEESYQELEKMTANAENILQKLGLPYRVISLCTGDMGFSAAKTYDLEVWIPAQNTYREISSCSNTEDFQARRAQIRYRDEADGKVKLLHTLNGSGLAVGRTVAAILENYQNEDGSVTIPEVLRPYMGGETVISPK</sequence>
<feature type="chain" id="PRO_0000122135" description="Serine--tRNA ligase">
    <location>
        <begin position="1"/>
        <end position="425"/>
    </location>
</feature>
<feature type="binding site" evidence="1">
    <location>
        <begin position="230"/>
        <end position="232"/>
    </location>
    <ligand>
        <name>L-serine</name>
        <dbReference type="ChEBI" id="CHEBI:33384"/>
    </ligand>
</feature>
<feature type="binding site" evidence="1">
    <location>
        <begin position="261"/>
        <end position="263"/>
    </location>
    <ligand>
        <name>ATP</name>
        <dbReference type="ChEBI" id="CHEBI:30616"/>
    </ligand>
</feature>
<feature type="binding site" evidence="1">
    <location>
        <position position="284"/>
    </location>
    <ligand>
        <name>L-serine</name>
        <dbReference type="ChEBI" id="CHEBI:33384"/>
    </ligand>
</feature>
<feature type="binding site" evidence="1">
    <location>
        <begin position="348"/>
        <end position="351"/>
    </location>
    <ligand>
        <name>ATP</name>
        <dbReference type="ChEBI" id="CHEBI:30616"/>
    </ligand>
</feature>
<feature type="binding site" evidence="1">
    <location>
        <position position="384"/>
    </location>
    <ligand>
        <name>L-serine</name>
        <dbReference type="ChEBI" id="CHEBI:33384"/>
    </ligand>
</feature>
<comment type="function">
    <text evidence="1">Catalyzes the attachment of serine to tRNA(Ser). Is also able to aminoacylate tRNA(Sec) with serine, to form the misacylated tRNA L-seryl-tRNA(Sec), which will be further converted into selenocysteinyl-tRNA(Sec).</text>
</comment>
<comment type="catalytic activity">
    <reaction evidence="1">
        <text>tRNA(Ser) + L-serine + ATP = L-seryl-tRNA(Ser) + AMP + diphosphate + H(+)</text>
        <dbReference type="Rhea" id="RHEA:12292"/>
        <dbReference type="Rhea" id="RHEA-COMP:9669"/>
        <dbReference type="Rhea" id="RHEA-COMP:9703"/>
        <dbReference type="ChEBI" id="CHEBI:15378"/>
        <dbReference type="ChEBI" id="CHEBI:30616"/>
        <dbReference type="ChEBI" id="CHEBI:33019"/>
        <dbReference type="ChEBI" id="CHEBI:33384"/>
        <dbReference type="ChEBI" id="CHEBI:78442"/>
        <dbReference type="ChEBI" id="CHEBI:78533"/>
        <dbReference type="ChEBI" id="CHEBI:456215"/>
        <dbReference type="EC" id="6.1.1.11"/>
    </reaction>
</comment>
<comment type="catalytic activity">
    <reaction evidence="1">
        <text>tRNA(Sec) + L-serine + ATP = L-seryl-tRNA(Sec) + AMP + diphosphate + H(+)</text>
        <dbReference type="Rhea" id="RHEA:42580"/>
        <dbReference type="Rhea" id="RHEA-COMP:9742"/>
        <dbReference type="Rhea" id="RHEA-COMP:10128"/>
        <dbReference type="ChEBI" id="CHEBI:15378"/>
        <dbReference type="ChEBI" id="CHEBI:30616"/>
        <dbReference type="ChEBI" id="CHEBI:33019"/>
        <dbReference type="ChEBI" id="CHEBI:33384"/>
        <dbReference type="ChEBI" id="CHEBI:78442"/>
        <dbReference type="ChEBI" id="CHEBI:78533"/>
        <dbReference type="ChEBI" id="CHEBI:456215"/>
        <dbReference type="EC" id="6.1.1.11"/>
    </reaction>
</comment>
<comment type="pathway">
    <text evidence="1">Aminoacyl-tRNA biosynthesis; selenocysteinyl-tRNA(Sec) biosynthesis; L-seryl-tRNA(Sec) from L-serine and tRNA(Sec): step 1/1.</text>
</comment>
<comment type="subunit">
    <text evidence="1">Homodimer. The tRNA molecule binds across the dimer.</text>
</comment>
<comment type="subcellular location">
    <subcellularLocation>
        <location evidence="1">Cytoplasm</location>
    </subcellularLocation>
</comment>
<comment type="domain">
    <text evidence="1">Consists of two distinct domains, a catalytic core and a N-terminal extension that is involved in tRNA binding.</text>
</comment>
<comment type="similarity">
    <text evidence="1">Belongs to the class-II aminoacyl-tRNA synthetase family. Type-1 seryl-tRNA synthetase subfamily.</text>
</comment>
<accession>Q99YE2</accession>
<accession>Q48X24</accession>
<protein>
    <recommendedName>
        <fullName evidence="1">Serine--tRNA ligase</fullName>
        <ecNumber evidence="1">6.1.1.11</ecNumber>
    </recommendedName>
    <alternativeName>
        <fullName evidence="1">Seryl-tRNA synthetase</fullName>
        <shortName evidence="1">SerRS</shortName>
    </alternativeName>
    <alternativeName>
        <fullName evidence="1">Seryl-tRNA(Ser/Sec) synthetase</fullName>
    </alternativeName>
</protein>
<proteinExistence type="inferred from homology"/>
<keyword id="KW-0030">Aminoacyl-tRNA synthetase</keyword>
<keyword id="KW-0067">ATP-binding</keyword>
<keyword id="KW-0963">Cytoplasm</keyword>
<keyword id="KW-0436">Ligase</keyword>
<keyword id="KW-0547">Nucleotide-binding</keyword>
<keyword id="KW-0648">Protein biosynthesis</keyword>
<keyword id="KW-1185">Reference proteome</keyword>
<evidence type="ECO:0000255" key="1">
    <source>
        <dbReference type="HAMAP-Rule" id="MF_00176"/>
    </source>
</evidence>
<gene>
    <name evidence="1" type="primary">serS</name>
    <name type="ordered locus">SPy_1742</name>
    <name type="ordered locus">M5005_Spy1483</name>
</gene>